<keyword id="KW-0997">Cell inner membrane</keyword>
<keyword id="KW-1003">Cell membrane</keyword>
<keyword id="KW-0472">Membrane</keyword>
<keyword id="KW-0653">Protein transport</keyword>
<keyword id="KW-1185">Reference proteome</keyword>
<keyword id="KW-0811">Translocation</keyword>
<keyword id="KW-0812">Transmembrane</keyword>
<keyword id="KW-1133">Transmembrane helix</keyword>
<keyword id="KW-0813">Transport</keyword>
<comment type="function">
    <text evidence="1">Part of the twin-arginine translocation (Tat) system that transports large folded proteins containing a characteristic twin-arginine motif in their signal peptide across membranes. Together with TatC, TatB is part of a receptor directly interacting with Tat signal peptides. TatB may form an oligomeric binding site that transiently accommodates folded Tat precursor proteins before their translocation.</text>
</comment>
<comment type="subunit">
    <text evidence="1">The Tat system comprises two distinct complexes: a TatABC complex, containing multiple copies of TatA, TatB and TatC subunits, and a separate TatA complex, containing only TatA subunits. Substrates initially bind to the TatABC complex, which probably triggers association of the separate TatA complex to form the active translocon.</text>
</comment>
<comment type="subcellular location">
    <subcellularLocation>
        <location evidence="1">Cell inner membrane</location>
        <topology evidence="1">Single-pass membrane protein</topology>
    </subcellularLocation>
</comment>
<comment type="similarity">
    <text evidence="1">Belongs to the TatB family.</text>
</comment>
<accession>P57047</accession>
<accession>P44559</accession>
<evidence type="ECO:0000255" key="1">
    <source>
        <dbReference type="HAMAP-Rule" id="MF_00237"/>
    </source>
</evidence>
<evidence type="ECO:0000256" key="2">
    <source>
        <dbReference type="SAM" id="MobiDB-lite"/>
    </source>
</evidence>
<gene>
    <name evidence="1" type="primary">tatB</name>
    <name type="ordered locus">HI_0187.1</name>
</gene>
<reference key="1">
    <citation type="journal article" date="1995" name="Science">
        <title>Whole-genome random sequencing and assembly of Haemophilus influenzae Rd.</title>
        <authorList>
            <person name="Fleischmann R.D."/>
            <person name="Adams M.D."/>
            <person name="White O."/>
            <person name="Clayton R.A."/>
            <person name="Kirkness E.F."/>
            <person name="Kerlavage A.R."/>
            <person name="Bult C.J."/>
            <person name="Tomb J.-F."/>
            <person name="Dougherty B.A."/>
            <person name="Merrick J.M."/>
            <person name="McKenney K."/>
            <person name="Sutton G.G."/>
            <person name="FitzHugh W."/>
            <person name="Fields C.A."/>
            <person name="Gocayne J.D."/>
            <person name="Scott J.D."/>
            <person name="Shirley R."/>
            <person name="Liu L.-I."/>
            <person name="Glodek A."/>
            <person name="Kelley J.M."/>
            <person name="Weidman J.F."/>
            <person name="Phillips C.A."/>
            <person name="Spriggs T."/>
            <person name="Hedblom E."/>
            <person name="Cotton M.D."/>
            <person name="Utterback T.R."/>
            <person name="Hanna M.C."/>
            <person name="Nguyen D.T."/>
            <person name="Saudek D.M."/>
            <person name="Brandon R.C."/>
            <person name="Fine L.D."/>
            <person name="Fritchman J.L."/>
            <person name="Fuhrmann J.L."/>
            <person name="Geoghagen N.S.M."/>
            <person name="Gnehm C.L."/>
            <person name="McDonald L.A."/>
            <person name="Small K.V."/>
            <person name="Fraser C.M."/>
            <person name="Smith H.O."/>
            <person name="Venter J.C."/>
        </authorList>
    </citation>
    <scope>NUCLEOTIDE SEQUENCE [LARGE SCALE GENOMIC DNA]</scope>
    <source>
        <strain>ATCC 51907 / DSM 11121 / KW20 / Rd</strain>
    </source>
</reference>
<dbReference type="EMBL" id="L42023">
    <property type="status" value="NOT_ANNOTATED_CDS"/>
    <property type="molecule type" value="Genomic_DNA"/>
</dbReference>
<dbReference type="RefSeq" id="NP_438356.1">
    <property type="nucleotide sequence ID" value="NC_000907.1"/>
</dbReference>
<dbReference type="SMR" id="P57047"/>
<dbReference type="PATRIC" id="fig|71421.8.peg.192"/>
<dbReference type="OrthoDB" id="9816005at2"/>
<dbReference type="PhylomeDB" id="P57047"/>
<dbReference type="BioCyc" id="HINF71421:G1GJ1-198-MONOMER"/>
<dbReference type="Proteomes" id="UP000000579">
    <property type="component" value="Chromosome"/>
</dbReference>
<dbReference type="GO" id="GO:0033281">
    <property type="term" value="C:TAT protein transport complex"/>
    <property type="evidence" value="ECO:0007669"/>
    <property type="project" value="UniProtKB-UniRule"/>
</dbReference>
<dbReference type="GO" id="GO:0008320">
    <property type="term" value="F:protein transmembrane transporter activity"/>
    <property type="evidence" value="ECO:0007669"/>
    <property type="project" value="UniProtKB-UniRule"/>
</dbReference>
<dbReference type="GO" id="GO:0043953">
    <property type="term" value="P:protein transport by the Tat complex"/>
    <property type="evidence" value="ECO:0007669"/>
    <property type="project" value="UniProtKB-UniRule"/>
</dbReference>
<dbReference type="Gene3D" id="1.20.5.3310">
    <property type="match status" value="1"/>
</dbReference>
<dbReference type="HAMAP" id="MF_00237">
    <property type="entry name" value="TatB"/>
    <property type="match status" value="1"/>
</dbReference>
<dbReference type="InterPro" id="IPR018448">
    <property type="entry name" value="TatB"/>
</dbReference>
<dbReference type="NCBIfam" id="TIGR01410">
    <property type="entry name" value="tatB"/>
    <property type="match status" value="1"/>
</dbReference>
<dbReference type="PANTHER" id="PTHR33162">
    <property type="entry name" value="SEC-INDEPENDENT PROTEIN TRANSLOCASE PROTEIN TATA, CHLOROPLASTIC"/>
    <property type="match status" value="1"/>
</dbReference>
<dbReference type="PANTHER" id="PTHR33162:SF1">
    <property type="entry name" value="SEC-INDEPENDENT PROTEIN TRANSLOCASE PROTEIN TATA, CHLOROPLASTIC"/>
    <property type="match status" value="1"/>
</dbReference>
<dbReference type="PRINTS" id="PR01506">
    <property type="entry name" value="TATBPROTEIN"/>
</dbReference>
<organism>
    <name type="scientific">Haemophilus influenzae (strain ATCC 51907 / DSM 11121 / KW20 / Rd)</name>
    <dbReference type="NCBI Taxonomy" id="71421"/>
    <lineage>
        <taxon>Bacteria</taxon>
        <taxon>Pseudomonadati</taxon>
        <taxon>Pseudomonadota</taxon>
        <taxon>Gammaproteobacteria</taxon>
        <taxon>Pasteurellales</taxon>
        <taxon>Pasteurellaceae</taxon>
        <taxon>Haemophilus</taxon>
    </lineage>
</organism>
<proteinExistence type="inferred from homology"/>
<protein>
    <recommendedName>
        <fullName evidence="1">Sec-independent protein translocase protein TatB</fullName>
    </recommendedName>
</protein>
<name>TATB_HAEIN</name>
<sequence length="186" mass="20430">MFDIGFSELILLMVLGLVVLGPKRLPIAIRTVMDWVKTIRGLAANVQNELKQELKLQELQDSIKKAESLNLQALSPELSKTVEELKAQADKMKAELEDKAAQAGTTVEDQIKEIKSAAENAEKSQNAISVEEAAETLSEAERTPTDLTALETHEKVELNTHLSSYYPPDDIEIAPASKSQSSKTKS</sequence>
<feature type="chain" id="PRO_0000192657" description="Sec-independent protein translocase protein TatB">
    <location>
        <begin position="1"/>
        <end position="186"/>
    </location>
</feature>
<feature type="transmembrane region" description="Helical" evidence="1">
    <location>
        <begin position="1"/>
        <end position="21"/>
    </location>
</feature>
<feature type="region of interest" description="Disordered" evidence="2">
    <location>
        <begin position="120"/>
        <end position="186"/>
    </location>
</feature>
<feature type="compositionally biased region" description="Polar residues" evidence="2">
    <location>
        <begin position="177"/>
        <end position="186"/>
    </location>
</feature>